<keyword id="KW-0134">Cell wall</keyword>
<keyword id="KW-0325">Glycoprotein</keyword>
<keyword id="KW-0378">Hydrolase</keyword>
<keyword id="KW-0645">Protease</keyword>
<keyword id="KW-1185">Reference proteome</keyword>
<keyword id="KW-0964">Secreted</keyword>
<keyword id="KW-0720">Serine protease</keyword>
<keyword id="KW-0732">Signal</keyword>
<protein>
    <recommendedName>
        <fullName>Subtilisin-like protease SBT5.3</fullName>
        <ecNumber>3.4.21.-</ecNumber>
    </recommendedName>
    <alternativeName>
        <fullName>Auxin-induced in root cultures protein 3</fullName>
    </alternativeName>
    <alternativeName>
        <fullName>Subtilase subfamily 5 member 3</fullName>
        <shortName>AtSBT5.3</shortName>
    </alternativeName>
    <alternativeName>
        <fullName>Subtilisin-like protease AIR3</fullName>
    </alternativeName>
</protein>
<reference key="1">
    <citation type="journal article" date="1999" name="DNA Res.">
        <title>A novel subtilisin-like protease gene from Arabidopsis thaliana is expressed at sites of lateral root emergence.</title>
        <authorList>
            <person name="Neuteboom L.W."/>
            <person name="Veth-Tello L.M."/>
            <person name="Clijdesdale O.R."/>
            <person name="Hooykaas P.J."/>
            <person name="van der Zaal B.J."/>
        </authorList>
    </citation>
    <scope>NUCLEOTIDE SEQUENCE [GENOMIC DNA]</scope>
    <scope>TISSUE SPECIFICITY</scope>
    <source>
        <strain>cv. Columbia</strain>
    </source>
</reference>
<reference key="2">
    <citation type="journal article" date="1999" name="Nature">
        <title>Sequence and analysis of chromosome 2 of the plant Arabidopsis thaliana.</title>
        <authorList>
            <person name="Lin X."/>
            <person name="Kaul S."/>
            <person name="Rounsley S.D."/>
            <person name="Shea T.P."/>
            <person name="Benito M.-I."/>
            <person name="Town C.D."/>
            <person name="Fujii C.Y."/>
            <person name="Mason T.M."/>
            <person name="Bowman C.L."/>
            <person name="Barnstead M.E."/>
            <person name="Feldblyum T.V."/>
            <person name="Buell C.R."/>
            <person name="Ketchum K.A."/>
            <person name="Lee J.J."/>
            <person name="Ronning C.M."/>
            <person name="Koo H.L."/>
            <person name="Moffat K.S."/>
            <person name="Cronin L.A."/>
            <person name="Shen M."/>
            <person name="Pai G."/>
            <person name="Van Aken S."/>
            <person name="Umayam L."/>
            <person name="Tallon L.J."/>
            <person name="Gill J.E."/>
            <person name="Adams M.D."/>
            <person name="Carrera A.J."/>
            <person name="Creasy T.H."/>
            <person name="Goodman H.M."/>
            <person name="Somerville C.R."/>
            <person name="Copenhaver G.P."/>
            <person name="Preuss D."/>
            <person name="Nierman W.C."/>
            <person name="White O."/>
            <person name="Eisen J.A."/>
            <person name="Salzberg S.L."/>
            <person name="Fraser C.M."/>
            <person name="Venter J.C."/>
        </authorList>
    </citation>
    <scope>NUCLEOTIDE SEQUENCE [LARGE SCALE GENOMIC DNA]</scope>
    <source>
        <strain>cv. Columbia</strain>
    </source>
</reference>
<reference key="3">
    <citation type="journal article" date="2017" name="Plant J.">
        <title>Araport11: a complete reannotation of the Arabidopsis thaliana reference genome.</title>
        <authorList>
            <person name="Cheng C.Y."/>
            <person name="Krishnakumar V."/>
            <person name="Chan A.P."/>
            <person name="Thibaud-Nissen F."/>
            <person name="Schobel S."/>
            <person name="Town C.D."/>
        </authorList>
    </citation>
    <scope>GENOME REANNOTATION</scope>
    <source>
        <strain>cv. Columbia</strain>
    </source>
</reference>
<reference key="4">
    <citation type="journal article" date="2003" name="Science">
        <title>Empirical analysis of transcriptional activity in the Arabidopsis genome.</title>
        <authorList>
            <person name="Yamada K."/>
            <person name="Lim J."/>
            <person name="Dale J.M."/>
            <person name="Chen H."/>
            <person name="Shinn P."/>
            <person name="Palm C.J."/>
            <person name="Southwick A.M."/>
            <person name="Wu H.C."/>
            <person name="Kim C.J."/>
            <person name="Nguyen M."/>
            <person name="Pham P.K."/>
            <person name="Cheuk R.F."/>
            <person name="Karlin-Newmann G."/>
            <person name="Liu S.X."/>
            <person name="Lam B."/>
            <person name="Sakano H."/>
            <person name="Wu T."/>
            <person name="Yu G."/>
            <person name="Miranda M."/>
            <person name="Quach H.L."/>
            <person name="Tripp M."/>
            <person name="Chang C.H."/>
            <person name="Lee J.M."/>
            <person name="Toriumi M.J."/>
            <person name="Chan M.M."/>
            <person name="Tang C.C."/>
            <person name="Onodera C.S."/>
            <person name="Deng J.M."/>
            <person name="Akiyama K."/>
            <person name="Ansari Y."/>
            <person name="Arakawa T."/>
            <person name="Banh J."/>
            <person name="Banno F."/>
            <person name="Bowser L."/>
            <person name="Brooks S.Y."/>
            <person name="Carninci P."/>
            <person name="Chao Q."/>
            <person name="Choy N."/>
            <person name="Enju A."/>
            <person name="Goldsmith A.D."/>
            <person name="Gurjal M."/>
            <person name="Hansen N.F."/>
            <person name="Hayashizaki Y."/>
            <person name="Johnson-Hopson C."/>
            <person name="Hsuan V.W."/>
            <person name="Iida K."/>
            <person name="Karnes M."/>
            <person name="Khan S."/>
            <person name="Koesema E."/>
            <person name="Ishida J."/>
            <person name="Jiang P.X."/>
            <person name="Jones T."/>
            <person name="Kawai J."/>
            <person name="Kamiya A."/>
            <person name="Meyers C."/>
            <person name="Nakajima M."/>
            <person name="Narusaka M."/>
            <person name="Seki M."/>
            <person name="Sakurai T."/>
            <person name="Satou M."/>
            <person name="Tamse R."/>
            <person name="Vaysberg M."/>
            <person name="Wallender E.K."/>
            <person name="Wong C."/>
            <person name="Yamamura Y."/>
            <person name="Yuan S."/>
            <person name="Shinozaki K."/>
            <person name="Davis R.W."/>
            <person name="Theologis A."/>
            <person name="Ecker J.R."/>
        </authorList>
    </citation>
    <scope>NUCLEOTIDE SEQUENCE [LARGE SCALE MRNA]</scope>
    <source>
        <strain>cv. Columbia</strain>
    </source>
</reference>
<reference key="5">
    <citation type="journal article" date="1999" name="Plant Mol. Biol.">
        <title>Isolation and characterization of cDNA clones corresponding with mRNAs that accumulate during auxin-induced lateral root formation.</title>
        <authorList>
            <person name="Neuteboom L.W."/>
            <person name="Ng J.M.Y."/>
            <person name="Kuyper M."/>
            <person name="Clijdesdale O.R."/>
            <person name="Hooykaas P.J.J."/>
            <person name="van der Zaal B.J."/>
        </authorList>
    </citation>
    <scope>DEVELOPMENTAL STAGE</scope>
    <scope>INDUCTION</scope>
    <source>
        <strain>cv. Columbia</strain>
    </source>
</reference>
<name>AIR3_ARATH</name>
<feature type="signal peptide" evidence="2">
    <location>
        <begin position="1"/>
        <end position="25"/>
    </location>
</feature>
<feature type="chain" id="PRO_0000429356" description="Subtilisin-like protease SBT5.3">
    <location>
        <begin position="26"/>
        <end position="772"/>
    </location>
</feature>
<feature type="domain" description="Inhibitor I9" evidence="2">
    <location>
        <begin position="31"/>
        <end position="116"/>
    </location>
</feature>
<feature type="domain" description="Peptidase S8" evidence="3">
    <location>
        <begin position="120"/>
        <end position="628"/>
    </location>
</feature>
<feature type="domain" description="PA">
    <location>
        <begin position="398"/>
        <end position="480"/>
    </location>
</feature>
<feature type="active site" description="Charge relay system" evidence="3">
    <location>
        <position position="153"/>
    </location>
</feature>
<feature type="active site" description="Charge relay system" evidence="3">
    <location>
        <position position="223"/>
    </location>
</feature>
<feature type="active site" description="Charge relay system" evidence="3">
    <location>
        <position position="561"/>
    </location>
</feature>
<feature type="glycosylation site" description="N-linked (GlcNAc...) asparagine" evidence="2">
    <location>
        <position position="211"/>
    </location>
</feature>
<feature type="glycosylation site" description="N-linked (GlcNAc...) asparagine" evidence="2">
    <location>
        <position position="246"/>
    </location>
</feature>
<feature type="glycosylation site" description="N-linked (GlcNAc...) asparagine" evidence="2">
    <location>
        <position position="306"/>
    </location>
</feature>
<feature type="glycosylation site" description="N-linked (GlcNAc...) asparagine" evidence="2">
    <location>
        <position position="396"/>
    </location>
</feature>
<feature type="glycosylation site" description="N-linked (GlcNAc...) asparagine" evidence="2">
    <location>
        <position position="606"/>
    </location>
</feature>
<feature type="glycosylation site" description="N-linked (GlcNAc...) asparagine" evidence="2">
    <location>
        <position position="651"/>
    </location>
</feature>
<feature type="glycosylation site" description="N-linked (GlcNAc...) asparagine" evidence="2">
    <location>
        <position position="662"/>
    </location>
</feature>
<feature type="glycosylation site" description="N-linked (GlcNAc...) asparagine" evidence="2">
    <location>
        <position position="684"/>
    </location>
</feature>
<feature type="glycosylation site" description="N-linked (GlcNAc...) asparagine" evidence="2">
    <location>
        <position position="725"/>
    </location>
</feature>
<organism>
    <name type="scientific">Arabidopsis thaliana</name>
    <name type="common">Mouse-ear cress</name>
    <dbReference type="NCBI Taxonomy" id="3702"/>
    <lineage>
        <taxon>Eukaryota</taxon>
        <taxon>Viridiplantae</taxon>
        <taxon>Streptophyta</taxon>
        <taxon>Embryophyta</taxon>
        <taxon>Tracheophyta</taxon>
        <taxon>Spermatophyta</taxon>
        <taxon>Magnoliopsida</taxon>
        <taxon>eudicotyledons</taxon>
        <taxon>Gunneridae</taxon>
        <taxon>Pentapetalae</taxon>
        <taxon>rosids</taxon>
        <taxon>malvids</taxon>
        <taxon>Brassicales</taxon>
        <taxon>Brassicaceae</taxon>
        <taxon>Camelineae</taxon>
        <taxon>Arabidopsis</taxon>
    </lineage>
</organism>
<comment type="function">
    <text evidence="1">Serine protease. Has a substrate preference for the hydrophobic residues Phe and Ala and the basic residue Asp in the P1 position, and for Asp, Leu or Ala in the P1' position. May play a role in the degradation of structural proteins in the extracellular matrix of cells located above sites of lateral root formation and thus facilitate lateral root emergence (By similarity).</text>
</comment>
<comment type="subcellular location">
    <subcellularLocation>
        <location evidence="1">Secreted</location>
    </subcellularLocation>
    <subcellularLocation>
        <location evidence="1">Secreted</location>
        <location evidence="1">Cell wall</location>
    </subcellularLocation>
</comment>
<comment type="tissue specificity">
    <text evidence="5">Expressed specifically at sites of lateral root emergence.</text>
</comment>
<comment type="developmental stage">
    <text evidence="4">Expressed during auxin-induced lateral root formation.</text>
</comment>
<comment type="induction">
    <text evidence="4">Induced between 4 and 8 hours after treatment with auxin and remains high for at least 24 hours.</text>
</comment>
<comment type="similarity">
    <text evidence="3">Belongs to the peptidase S8 family.</text>
</comment>
<comment type="sequence caution" evidence="6">
    <conflict type="frameshift">
        <sequence resource="EMBL-CDS" id="AAK74005"/>
    </conflict>
</comment>
<comment type="sequence caution" evidence="6">
    <conflict type="erroneous gene model prediction">
        <sequence resource="EMBL-CDS" id="AAM15440"/>
    </conflict>
</comment>
<sequence>MKLTHNFSFLLLLLLVHMSSKHILASKDSSSYVVYFGAHSHVGEITEDAMDRVKETHYDFLGSFTGSRERATDAIFYSYTKHINGFAAHLDHDLAYEISKHPEVVSVFPNKALKLHTTRSWDFLGLEHNSYVPSSSIWRKARFGEDTIIANLDTGVWPESKSFRDEGLGPIPSRWKGICQNQKDATFHCNRKLIGARYFNKGYAAAVGHLNSSFDSPRDLDGHGSHTLSTAAGDFVPGVSIFGQGNGTAKGGSPRARVAAYKVCWPPVKGNECYDADVLAAFDAAIHDGADVISVSLGGEPTSFFNDSVAIGSFHAAKKRIVVVCSAGNSGPADSTVSNVAPWQITVGASTMDREFASNLVLGNGKHYKGQSLSSTALPHAKFYPIMASVNAKAKNASALDAQLCKLGSLDPIKTKGKILVCLRGQNGRVEKGRAVALGGGIGMVLENTYVTGNDLLADPHVLPATQLTSKDSFAVSRYISQTKKPIAHITPSRTDLGLKPAPVMASFSSKGPSIVAPQILKPDITAPGVSVIAAYTGAVSPTNEQFDPRRLLFNAISGTSMSCPHISGIAGLLKTRYPSWSPAAIRSAIMTTATIMDDIPGPIQNATNMKATPFSFGAGHVQPNLAVNPGLVYDLGIKDYLNFLCSLGYNASQISVFSGNNFTCSSPKISLVNLNYPSITVPNLTSSKVTVSRTVKNVGRPSMYTVKVNNPQGVYVAVKPTSLNFTKVGEQKTFKVILVKSKGNVAKGYVFGELVWSDKKHRVRSPIVVKL</sequence>
<accession>Q9ZSP5</accession>
<accession>Q8S896</accession>
<accession>Q8S8B0</accession>
<accession>Q93W36</accession>
<gene>
    <name type="primary">AIR3</name>
    <name type="synonym">SBT5.3</name>
    <name type="ordered locus">At2g04160</name>
    <name type="ORF">F3L12</name>
    <name type="ORF">T16B23</name>
</gene>
<evidence type="ECO:0000250" key="1"/>
<evidence type="ECO:0000255" key="2"/>
<evidence type="ECO:0000255" key="3">
    <source>
        <dbReference type="PROSITE-ProRule" id="PRU01240"/>
    </source>
</evidence>
<evidence type="ECO:0000269" key="4">
    <source>
    </source>
</evidence>
<evidence type="ECO:0000269" key="5">
    <source>
    </source>
</evidence>
<evidence type="ECO:0000305" key="6"/>
<dbReference type="EC" id="3.4.21.-"/>
<dbReference type="EMBL" id="AF098632">
    <property type="protein sequence ID" value="AAD12260.1"/>
    <property type="molecule type" value="Genomic_DNA"/>
</dbReference>
<dbReference type="EMBL" id="AC007178">
    <property type="protein sequence ID" value="AAM15440.1"/>
    <property type="status" value="ALT_SEQ"/>
    <property type="molecule type" value="Genomic_DNA"/>
</dbReference>
<dbReference type="EMBL" id="AC007293">
    <property type="protein sequence ID" value="AAM15483.1"/>
    <property type="molecule type" value="Genomic_DNA"/>
</dbReference>
<dbReference type="EMBL" id="CP002685">
    <property type="protein sequence ID" value="AEC05801.1"/>
    <property type="molecule type" value="Genomic_DNA"/>
</dbReference>
<dbReference type="EMBL" id="AY045647">
    <property type="protein sequence ID" value="AAK74005.1"/>
    <property type="status" value="ALT_FRAME"/>
    <property type="molecule type" value="mRNA"/>
</dbReference>
<dbReference type="EMBL" id="AY058235">
    <property type="protein sequence ID" value="AAL15409.1"/>
    <property type="molecule type" value="mRNA"/>
</dbReference>
<dbReference type="RefSeq" id="NP_565309.2">
    <property type="nucleotide sequence ID" value="NM_126453.5"/>
</dbReference>
<dbReference type="SMR" id="Q9ZSP5"/>
<dbReference type="FunCoup" id="Q9ZSP5">
    <property type="interactions" value="133"/>
</dbReference>
<dbReference type="STRING" id="3702.Q9ZSP5"/>
<dbReference type="MEROPS" id="S08.119"/>
<dbReference type="GlyCosmos" id="Q9ZSP5">
    <property type="glycosylation" value="9 sites, No reported glycans"/>
</dbReference>
<dbReference type="GlyGen" id="Q9ZSP5">
    <property type="glycosylation" value="9 sites"/>
</dbReference>
<dbReference type="iPTMnet" id="Q9ZSP5"/>
<dbReference type="PaxDb" id="3702-AT2G04160.1"/>
<dbReference type="ProteomicsDB" id="245014"/>
<dbReference type="EnsemblPlants" id="AT2G04160.1">
    <property type="protein sequence ID" value="AT2G04160.1"/>
    <property type="gene ID" value="AT2G04160"/>
</dbReference>
<dbReference type="GeneID" id="814953"/>
<dbReference type="Gramene" id="AT2G04160.1">
    <property type="protein sequence ID" value="AT2G04160.1"/>
    <property type="gene ID" value="AT2G04160"/>
</dbReference>
<dbReference type="KEGG" id="ath:AT2G04160"/>
<dbReference type="Araport" id="AT2G04160"/>
<dbReference type="TAIR" id="AT2G04160">
    <property type="gene designation" value="AIR3"/>
</dbReference>
<dbReference type="eggNOG" id="ENOG502QT1T">
    <property type="taxonomic scope" value="Eukaryota"/>
</dbReference>
<dbReference type="HOGENOM" id="CLU_000625_4_6_1"/>
<dbReference type="InParanoid" id="Q9ZSP5"/>
<dbReference type="OMA" id="QVTESHY"/>
<dbReference type="PhylomeDB" id="Q9ZSP5"/>
<dbReference type="PRO" id="PR:Q9ZSP5"/>
<dbReference type="Proteomes" id="UP000006548">
    <property type="component" value="Chromosome 2"/>
</dbReference>
<dbReference type="ExpressionAtlas" id="Q9ZSP5">
    <property type="expression patterns" value="baseline and differential"/>
</dbReference>
<dbReference type="GO" id="GO:0005576">
    <property type="term" value="C:extracellular region"/>
    <property type="evidence" value="ECO:0007669"/>
    <property type="project" value="UniProtKB-SubCell"/>
</dbReference>
<dbReference type="GO" id="GO:0004252">
    <property type="term" value="F:serine-type endopeptidase activity"/>
    <property type="evidence" value="ECO:0000250"/>
    <property type="project" value="TAIR"/>
</dbReference>
<dbReference type="GO" id="GO:0010102">
    <property type="term" value="P:lateral root morphogenesis"/>
    <property type="evidence" value="ECO:0000270"/>
    <property type="project" value="TAIR"/>
</dbReference>
<dbReference type="GO" id="GO:0006508">
    <property type="term" value="P:proteolysis"/>
    <property type="evidence" value="ECO:0007669"/>
    <property type="project" value="UniProtKB-KW"/>
</dbReference>
<dbReference type="GO" id="GO:0009733">
    <property type="term" value="P:response to auxin"/>
    <property type="evidence" value="ECO:0000270"/>
    <property type="project" value="TAIR"/>
</dbReference>
<dbReference type="CDD" id="cd02120">
    <property type="entry name" value="PA_subtilisin_like"/>
    <property type="match status" value="1"/>
</dbReference>
<dbReference type="CDD" id="cd04852">
    <property type="entry name" value="Peptidases_S8_3"/>
    <property type="match status" value="1"/>
</dbReference>
<dbReference type="FunFam" id="2.60.40.2310:FF:000001">
    <property type="entry name" value="Subtilisin-like protease SBT1.5"/>
    <property type="match status" value="1"/>
</dbReference>
<dbReference type="FunFam" id="3.40.50.200:FF:000006">
    <property type="entry name" value="Subtilisin-like protease SBT1.5"/>
    <property type="match status" value="1"/>
</dbReference>
<dbReference type="FunFam" id="3.50.30.30:FF:000005">
    <property type="entry name" value="subtilisin-like protease SBT1.5"/>
    <property type="match status" value="1"/>
</dbReference>
<dbReference type="FunFam" id="3.30.70.80:FF:000002">
    <property type="entry name" value="Subtilisin-like protease SBT5.3"/>
    <property type="match status" value="1"/>
</dbReference>
<dbReference type="Gene3D" id="2.60.40.2310">
    <property type="match status" value="1"/>
</dbReference>
<dbReference type="Gene3D" id="3.50.30.30">
    <property type="match status" value="1"/>
</dbReference>
<dbReference type="Gene3D" id="3.30.70.80">
    <property type="entry name" value="Peptidase S8 propeptide/proteinase inhibitor I9"/>
    <property type="match status" value="1"/>
</dbReference>
<dbReference type="Gene3D" id="3.40.50.200">
    <property type="entry name" value="Peptidase S8/S53 domain"/>
    <property type="match status" value="1"/>
</dbReference>
<dbReference type="InterPro" id="IPR003137">
    <property type="entry name" value="PA_domain"/>
</dbReference>
<dbReference type="InterPro" id="IPR000209">
    <property type="entry name" value="Peptidase_S8/S53_dom"/>
</dbReference>
<dbReference type="InterPro" id="IPR036852">
    <property type="entry name" value="Peptidase_S8/S53_dom_sf"/>
</dbReference>
<dbReference type="InterPro" id="IPR023828">
    <property type="entry name" value="Peptidase_S8_Ser-AS"/>
</dbReference>
<dbReference type="InterPro" id="IPR015500">
    <property type="entry name" value="Peptidase_S8_subtilisin-rel"/>
</dbReference>
<dbReference type="InterPro" id="IPR034197">
    <property type="entry name" value="Peptidases_S8_3"/>
</dbReference>
<dbReference type="InterPro" id="IPR010259">
    <property type="entry name" value="S8pro/Inhibitor_I9"/>
</dbReference>
<dbReference type="InterPro" id="IPR037045">
    <property type="entry name" value="S8pro/Inhibitor_I9_sf"/>
</dbReference>
<dbReference type="InterPro" id="IPR045051">
    <property type="entry name" value="SBT"/>
</dbReference>
<dbReference type="InterPro" id="IPR041469">
    <property type="entry name" value="Subtilisin-like_FN3"/>
</dbReference>
<dbReference type="PANTHER" id="PTHR10795">
    <property type="entry name" value="PROPROTEIN CONVERTASE SUBTILISIN/KEXIN"/>
    <property type="match status" value="1"/>
</dbReference>
<dbReference type="Pfam" id="PF17766">
    <property type="entry name" value="fn3_6"/>
    <property type="match status" value="1"/>
</dbReference>
<dbReference type="Pfam" id="PF05922">
    <property type="entry name" value="Inhibitor_I9"/>
    <property type="match status" value="1"/>
</dbReference>
<dbReference type="Pfam" id="PF02225">
    <property type="entry name" value="PA"/>
    <property type="match status" value="1"/>
</dbReference>
<dbReference type="Pfam" id="PF00082">
    <property type="entry name" value="Peptidase_S8"/>
    <property type="match status" value="1"/>
</dbReference>
<dbReference type="PRINTS" id="PR00723">
    <property type="entry name" value="SUBTILISIN"/>
</dbReference>
<dbReference type="SUPFAM" id="SSF52743">
    <property type="entry name" value="Subtilisin-like"/>
    <property type="match status" value="1"/>
</dbReference>
<dbReference type="PROSITE" id="PS51892">
    <property type="entry name" value="SUBTILASE"/>
    <property type="match status" value="1"/>
</dbReference>
<dbReference type="PROSITE" id="PS00138">
    <property type="entry name" value="SUBTILASE_SER"/>
    <property type="match status" value="1"/>
</dbReference>
<proteinExistence type="evidence at transcript level"/>